<proteinExistence type="evidence at protein level"/>
<organism>
    <name type="scientific">Mus musculus</name>
    <name type="common">Mouse</name>
    <dbReference type="NCBI Taxonomy" id="10090"/>
    <lineage>
        <taxon>Eukaryota</taxon>
        <taxon>Metazoa</taxon>
        <taxon>Chordata</taxon>
        <taxon>Craniata</taxon>
        <taxon>Vertebrata</taxon>
        <taxon>Euteleostomi</taxon>
        <taxon>Mammalia</taxon>
        <taxon>Eutheria</taxon>
        <taxon>Euarchontoglires</taxon>
        <taxon>Glires</taxon>
        <taxon>Rodentia</taxon>
        <taxon>Myomorpha</taxon>
        <taxon>Muroidea</taxon>
        <taxon>Muridae</taxon>
        <taxon>Murinae</taxon>
        <taxon>Mus</taxon>
        <taxon>Mus</taxon>
    </lineage>
</organism>
<reference key="1">
    <citation type="submission" date="2001-10" db="EMBL/GenBank/DDBJ databases">
        <authorList>
            <person name="Ozawa R."/>
            <person name="Noguchi H."/>
            <person name="Taylor T.D."/>
            <person name="Takeda T."/>
            <person name="Hattori M."/>
            <person name="Sakaki Y."/>
        </authorList>
    </citation>
    <scope>NUCLEOTIDE SEQUENCE [MRNA] (ISOFORMS 1; 2 AND 3)</scope>
</reference>
<reference key="2">
    <citation type="journal article" date="2005" name="Science">
        <title>The transcriptional landscape of the mammalian genome.</title>
        <authorList>
            <person name="Carninci P."/>
            <person name="Kasukawa T."/>
            <person name="Katayama S."/>
            <person name="Gough J."/>
            <person name="Frith M.C."/>
            <person name="Maeda N."/>
            <person name="Oyama R."/>
            <person name="Ravasi T."/>
            <person name="Lenhard B."/>
            <person name="Wells C."/>
            <person name="Kodzius R."/>
            <person name="Shimokawa K."/>
            <person name="Bajic V.B."/>
            <person name="Brenner S.E."/>
            <person name="Batalov S."/>
            <person name="Forrest A.R."/>
            <person name="Zavolan M."/>
            <person name="Davis M.J."/>
            <person name="Wilming L.G."/>
            <person name="Aidinis V."/>
            <person name="Allen J.E."/>
            <person name="Ambesi-Impiombato A."/>
            <person name="Apweiler R."/>
            <person name="Aturaliya R.N."/>
            <person name="Bailey T.L."/>
            <person name="Bansal M."/>
            <person name="Baxter L."/>
            <person name="Beisel K.W."/>
            <person name="Bersano T."/>
            <person name="Bono H."/>
            <person name="Chalk A.M."/>
            <person name="Chiu K.P."/>
            <person name="Choudhary V."/>
            <person name="Christoffels A."/>
            <person name="Clutterbuck D.R."/>
            <person name="Crowe M.L."/>
            <person name="Dalla E."/>
            <person name="Dalrymple B.P."/>
            <person name="de Bono B."/>
            <person name="Della Gatta G."/>
            <person name="di Bernardo D."/>
            <person name="Down T."/>
            <person name="Engstrom P."/>
            <person name="Fagiolini M."/>
            <person name="Faulkner G."/>
            <person name="Fletcher C.F."/>
            <person name="Fukushima T."/>
            <person name="Furuno M."/>
            <person name="Futaki S."/>
            <person name="Gariboldi M."/>
            <person name="Georgii-Hemming P."/>
            <person name="Gingeras T.R."/>
            <person name="Gojobori T."/>
            <person name="Green R.E."/>
            <person name="Gustincich S."/>
            <person name="Harbers M."/>
            <person name="Hayashi Y."/>
            <person name="Hensch T.K."/>
            <person name="Hirokawa N."/>
            <person name="Hill D."/>
            <person name="Huminiecki L."/>
            <person name="Iacono M."/>
            <person name="Ikeo K."/>
            <person name="Iwama A."/>
            <person name="Ishikawa T."/>
            <person name="Jakt M."/>
            <person name="Kanapin A."/>
            <person name="Katoh M."/>
            <person name="Kawasawa Y."/>
            <person name="Kelso J."/>
            <person name="Kitamura H."/>
            <person name="Kitano H."/>
            <person name="Kollias G."/>
            <person name="Krishnan S.P."/>
            <person name="Kruger A."/>
            <person name="Kummerfeld S.K."/>
            <person name="Kurochkin I.V."/>
            <person name="Lareau L.F."/>
            <person name="Lazarevic D."/>
            <person name="Lipovich L."/>
            <person name="Liu J."/>
            <person name="Liuni S."/>
            <person name="McWilliam S."/>
            <person name="Madan Babu M."/>
            <person name="Madera M."/>
            <person name="Marchionni L."/>
            <person name="Matsuda H."/>
            <person name="Matsuzawa S."/>
            <person name="Miki H."/>
            <person name="Mignone F."/>
            <person name="Miyake S."/>
            <person name="Morris K."/>
            <person name="Mottagui-Tabar S."/>
            <person name="Mulder N."/>
            <person name="Nakano N."/>
            <person name="Nakauchi H."/>
            <person name="Ng P."/>
            <person name="Nilsson R."/>
            <person name="Nishiguchi S."/>
            <person name="Nishikawa S."/>
            <person name="Nori F."/>
            <person name="Ohara O."/>
            <person name="Okazaki Y."/>
            <person name="Orlando V."/>
            <person name="Pang K.C."/>
            <person name="Pavan W.J."/>
            <person name="Pavesi G."/>
            <person name="Pesole G."/>
            <person name="Petrovsky N."/>
            <person name="Piazza S."/>
            <person name="Reed J."/>
            <person name="Reid J.F."/>
            <person name="Ring B.Z."/>
            <person name="Ringwald M."/>
            <person name="Rost B."/>
            <person name="Ruan Y."/>
            <person name="Salzberg S.L."/>
            <person name="Sandelin A."/>
            <person name="Schneider C."/>
            <person name="Schoenbach C."/>
            <person name="Sekiguchi K."/>
            <person name="Semple C.A."/>
            <person name="Seno S."/>
            <person name="Sessa L."/>
            <person name="Sheng Y."/>
            <person name="Shibata Y."/>
            <person name="Shimada H."/>
            <person name="Shimada K."/>
            <person name="Silva D."/>
            <person name="Sinclair B."/>
            <person name="Sperling S."/>
            <person name="Stupka E."/>
            <person name="Sugiura K."/>
            <person name="Sultana R."/>
            <person name="Takenaka Y."/>
            <person name="Taki K."/>
            <person name="Tammoja K."/>
            <person name="Tan S.L."/>
            <person name="Tang S."/>
            <person name="Taylor M.S."/>
            <person name="Tegner J."/>
            <person name="Teichmann S.A."/>
            <person name="Ueda H.R."/>
            <person name="van Nimwegen E."/>
            <person name="Verardo R."/>
            <person name="Wei C.L."/>
            <person name="Yagi K."/>
            <person name="Yamanishi H."/>
            <person name="Zabarovsky E."/>
            <person name="Zhu S."/>
            <person name="Zimmer A."/>
            <person name="Hide W."/>
            <person name="Bult C."/>
            <person name="Grimmond S.M."/>
            <person name="Teasdale R.D."/>
            <person name="Liu E.T."/>
            <person name="Brusic V."/>
            <person name="Quackenbush J."/>
            <person name="Wahlestedt C."/>
            <person name="Mattick J.S."/>
            <person name="Hume D.A."/>
            <person name="Kai C."/>
            <person name="Sasaki D."/>
            <person name="Tomaru Y."/>
            <person name="Fukuda S."/>
            <person name="Kanamori-Katayama M."/>
            <person name="Suzuki M."/>
            <person name="Aoki J."/>
            <person name="Arakawa T."/>
            <person name="Iida J."/>
            <person name="Imamura K."/>
            <person name="Itoh M."/>
            <person name="Kato T."/>
            <person name="Kawaji H."/>
            <person name="Kawagashira N."/>
            <person name="Kawashima T."/>
            <person name="Kojima M."/>
            <person name="Kondo S."/>
            <person name="Konno H."/>
            <person name="Nakano K."/>
            <person name="Ninomiya N."/>
            <person name="Nishio T."/>
            <person name="Okada M."/>
            <person name="Plessy C."/>
            <person name="Shibata K."/>
            <person name="Shiraki T."/>
            <person name="Suzuki S."/>
            <person name="Tagami M."/>
            <person name="Waki K."/>
            <person name="Watahiki A."/>
            <person name="Okamura-Oho Y."/>
            <person name="Suzuki H."/>
            <person name="Kawai J."/>
            <person name="Hayashizaki Y."/>
        </authorList>
    </citation>
    <scope>NUCLEOTIDE SEQUENCE [LARGE SCALE MRNA] (ISOFORMS 1; 2 AND 5)</scope>
    <source>
        <strain>C57BL/6J</strain>
        <tissue>Embryo</tissue>
        <tissue>Medulla oblongata</tissue>
    </source>
</reference>
<reference key="3">
    <citation type="journal article" date="2004" name="Genome Res.">
        <title>The status, quality, and expansion of the NIH full-length cDNA project: the Mammalian Gene Collection (MGC).</title>
        <authorList>
            <consortium name="The MGC Project Team"/>
        </authorList>
    </citation>
    <scope>NUCLEOTIDE SEQUENCE [LARGE SCALE MRNA] (ISOFORM 3)</scope>
    <source>
        <tissue>Brain</tissue>
    </source>
</reference>
<reference key="4">
    <citation type="journal article" date="1993" name="Mol. Cell. Biol.">
        <title>Ets proteins: new factors that regulate immunoglobulin heavy-chain gene expression.</title>
        <authorList>
            <person name="Rivera R.R."/>
            <person name="Stuiver M.H."/>
            <person name="Steenbergen R."/>
            <person name="Murre C."/>
        </authorList>
    </citation>
    <scope>NUCLEOTIDE SEQUENCE [MRNA] OF 181-452</scope>
</reference>
<reference key="5">
    <citation type="journal article" date="2002" name="Oncogene">
        <title>Molecular cloning of ESET, a novel histone H3-specific methyltransferase that interacts with ERG transcription factor.</title>
        <authorList>
            <person name="Yang L."/>
            <person name="Xia L."/>
            <person name="Wu D.Y."/>
            <person name="Wang H."/>
            <person name="Chansky H.A."/>
            <person name="Schubach W.H."/>
            <person name="Hickstein D.D."/>
            <person name="Zhang Y."/>
        </authorList>
    </citation>
    <scope>INTERACTION WITH SETDB1</scope>
</reference>
<reference key="6">
    <citation type="journal article" date="2010" name="Cell">
        <title>A tissue-specific atlas of mouse protein phosphorylation and expression.</title>
        <authorList>
            <person name="Huttlin E.L."/>
            <person name="Jedrychowski M.P."/>
            <person name="Elias J.E."/>
            <person name="Goswami T."/>
            <person name="Rad R."/>
            <person name="Beausoleil S.A."/>
            <person name="Villen J."/>
            <person name="Haas W."/>
            <person name="Sowa M.E."/>
            <person name="Gygi S.P."/>
        </authorList>
    </citation>
    <scope>PHOSPHORYLATION [LARGE SCALE ANALYSIS] AT SER-55; SER-88 AND SER-103</scope>
    <scope>IDENTIFICATION BY MASS SPECTROMETRY [LARGE SCALE ANALYSIS]</scope>
    <source>
        <tissue>Brown adipose tissue</tissue>
        <tissue>Heart</tissue>
        <tissue>Kidney</tissue>
        <tissue>Lung</tissue>
        <tissue>Spleen</tissue>
    </source>
</reference>
<feature type="chain" id="PRO_0000204104" description="Transcriptional regulator ERG">
    <location>
        <begin position="1"/>
        <end position="486"/>
    </location>
</feature>
<feature type="domain" description="PNT" evidence="4">
    <location>
        <begin position="120"/>
        <end position="206"/>
    </location>
</feature>
<feature type="DNA-binding region" description="ETS" evidence="3">
    <location>
        <begin position="318"/>
        <end position="398"/>
    </location>
</feature>
<feature type="region of interest" description="Disordered" evidence="5">
    <location>
        <begin position="41"/>
        <end position="62"/>
    </location>
</feature>
<feature type="region of interest" description="Disordered" evidence="5">
    <location>
        <begin position="79"/>
        <end position="99"/>
    </location>
</feature>
<feature type="region of interest" description="Disordered" evidence="5">
    <location>
        <begin position="249"/>
        <end position="311"/>
    </location>
</feature>
<feature type="compositionally biased region" description="Polar residues" evidence="5">
    <location>
        <begin position="41"/>
        <end position="54"/>
    </location>
</feature>
<feature type="compositionally biased region" description="Polar residues" evidence="5">
    <location>
        <begin position="271"/>
        <end position="284"/>
    </location>
</feature>
<feature type="modified residue" description="Phosphoserine" evidence="10">
    <location>
        <position position="55"/>
    </location>
</feature>
<feature type="modified residue" description="Phosphoserine" evidence="10">
    <location>
        <position position="88"/>
    </location>
</feature>
<feature type="modified residue" description="Phosphoserine" evidence="10">
    <location>
        <position position="103"/>
    </location>
</feature>
<feature type="cross-link" description="Glycyl lysine isopeptide (Lys-Gly) (interchain with G-Cter in SUMO2)" evidence="2">
    <location>
        <position position="289"/>
    </location>
</feature>
<feature type="splice variant" id="VSP_026585" description="In isoform 5." evidence="7">
    <original>MIQTVPDPAAH</original>
    <variation>MAST</variation>
    <location>
        <begin position="1"/>
        <end position="11"/>
    </location>
</feature>
<feature type="splice variant" id="VSP_007641" description="In isoform 1." evidence="7 8">
    <location>
        <begin position="232"/>
        <end position="255"/>
    </location>
</feature>
<feature type="splice variant" id="VSP_007642" description="In isoform 2." evidence="7 8">
    <location>
        <begin position="256"/>
        <end position="278"/>
    </location>
</feature>
<feature type="sequence conflict" description="In Ref. 2; BAC37131." evidence="9" ref="2">
    <original>L</original>
    <variation>Q</variation>
    <location>
        <position position="175"/>
    </location>
</feature>
<comment type="function">
    <text>Transcriptional regulator. May participate in transcriptional regulation through the recruitment of SETDB1 histone methyltransferase and subsequent modification of local chromatin structure.</text>
</comment>
<comment type="subunit">
    <text evidence="6">Identified in a IGF2BP1-dependent mRNP granule complex containing untranslated mRNAs. Interacts with SETDB1.</text>
</comment>
<comment type="interaction">
    <interactant intactId="EBI-79647">
        <id>P81270</id>
    </interactant>
    <interactant intactId="EBI-79658">
        <id>O88974</id>
        <label>Setdb1</label>
    </interactant>
    <organismsDiffer>false</organismsDiffer>
    <experiments>3</experiments>
</comment>
<comment type="subcellular location">
    <subcellularLocation>
        <location>Nucleus</location>
    </subcellularLocation>
    <subcellularLocation>
        <location evidence="1">Cytoplasm</location>
    </subcellularLocation>
    <text evidence="1">Localized in cytoplasmic mRNP granules containing untranslated mRNAs.</text>
</comment>
<comment type="alternative products">
    <event type="alternative splicing"/>
    <isoform>
        <id>P81270-1</id>
        <name>3</name>
        <sequence type="displayed"/>
    </isoform>
    <isoform>
        <id>P81270-3</id>
        <name>1</name>
        <sequence type="described" ref="VSP_007641"/>
    </isoform>
    <isoform>
        <id>P81270-2</id>
        <name>2</name>
        <sequence type="described" ref="VSP_007642"/>
    </isoform>
    <isoform>
        <id>P81270-4</id>
        <name>5</name>
        <sequence type="described" ref="VSP_026585"/>
    </isoform>
</comment>
<comment type="similarity">
    <text evidence="9">Belongs to the ETS family.</text>
</comment>
<evidence type="ECO:0000250" key="1"/>
<evidence type="ECO:0000250" key="2">
    <source>
        <dbReference type="UniProtKB" id="P11308"/>
    </source>
</evidence>
<evidence type="ECO:0000255" key="3">
    <source>
        <dbReference type="PROSITE-ProRule" id="PRU00237"/>
    </source>
</evidence>
<evidence type="ECO:0000255" key="4">
    <source>
        <dbReference type="PROSITE-ProRule" id="PRU00762"/>
    </source>
</evidence>
<evidence type="ECO:0000256" key="5">
    <source>
        <dbReference type="SAM" id="MobiDB-lite"/>
    </source>
</evidence>
<evidence type="ECO:0000269" key="6">
    <source>
    </source>
</evidence>
<evidence type="ECO:0000303" key="7">
    <source>
    </source>
</evidence>
<evidence type="ECO:0000303" key="8">
    <source ref="1"/>
</evidence>
<evidence type="ECO:0000305" key="9"/>
<evidence type="ECO:0007744" key="10">
    <source>
    </source>
</evidence>
<dbReference type="EMBL" id="AB073078">
    <property type="protein sequence ID" value="BAB69948.1"/>
    <property type="molecule type" value="mRNA"/>
</dbReference>
<dbReference type="EMBL" id="AB073079">
    <property type="protein sequence ID" value="BAB69949.1"/>
    <property type="molecule type" value="mRNA"/>
</dbReference>
<dbReference type="EMBL" id="AB073080">
    <property type="protein sequence ID" value="BAB69950.1"/>
    <property type="molecule type" value="mRNA"/>
</dbReference>
<dbReference type="EMBL" id="AK050922">
    <property type="protein sequence ID" value="BAC34461.1"/>
    <property type="molecule type" value="mRNA"/>
</dbReference>
<dbReference type="EMBL" id="AK078113">
    <property type="protein sequence ID" value="BAC37131.1"/>
    <property type="molecule type" value="mRNA"/>
</dbReference>
<dbReference type="EMBL" id="BC145850">
    <property type="protein sequence ID" value="AAI45851.1"/>
    <property type="molecule type" value="mRNA"/>
</dbReference>
<dbReference type="EMBL" id="S66169">
    <property type="protein sequence ID" value="AAB28525.1"/>
    <property type="molecule type" value="mRNA"/>
</dbReference>
<dbReference type="CCDS" id="CCDS37411.1">
    <molecule id="P81270-1"/>
</dbReference>
<dbReference type="CCDS" id="CCDS79493.1">
    <molecule id="P81270-4"/>
</dbReference>
<dbReference type="CCDS" id="CCDS79495.1">
    <molecule id="P81270-3"/>
</dbReference>
<dbReference type="CCDS" id="CCDS79496.1">
    <molecule id="P81270-2"/>
</dbReference>
<dbReference type="PIR" id="A54617">
    <property type="entry name" value="A54617"/>
</dbReference>
<dbReference type="RefSeq" id="NP_001289081.1">
    <molecule id="P81270-3"/>
    <property type="nucleotide sequence ID" value="NM_001302152.1"/>
</dbReference>
<dbReference type="RefSeq" id="NP_001289082.1">
    <molecule id="P81270-4"/>
    <property type="nucleotide sequence ID" value="NM_001302153.1"/>
</dbReference>
<dbReference type="RefSeq" id="NP_001289083.1">
    <property type="nucleotide sequence ID" value="NM_001302154.1"/>
</dbReference>
<dbReference type="RefSeq" id="NP_001289108.1">
    <molecule id="P81270-2"/>
    <property type="nucleotide sequence ID" value="NM_001302179.1"/>
</dbReference>
<dbReference type="RefSeq" id="NP_001289112.1">
    <property type="nucleotide sequence ID" value="NM_001302183.1"/>
</dbReference>
<dbReference type="RefSeq" id="NP_598420.1">
    <molecule id="P81270-1"/>
    <property type="nucleotide sequence ID" value="NM_133659.3"/>
</dbReference>
<dbReference type="RefSeq" id="XP_006522957.1">
    <molecule id="P81270-1"/>
    <property type="nucleotide sequence ID" value="XM_006522894.3"/>
</dbReference>
<dbReference type="RefSeq" id="XP_006522958.1">
    <molecule id="P81270-1"/>
    <property type="nucleotide sequence ID" value="XM_006522895.3"/>
</dbReference>
<dbReference type="RefSeq" id="XP_006522959.1">
    <molecule id="P81270-1"/>
    <property type="nucleotide sequence ID" value="XM_006522896.5"/>
</dbReference>
<dbReference type="RefSeq" id="XP_006522962.1">
    <molecule id="P81270-2"/>
    <property type="nucleotide sequence ID" value="XM_006522899.3"/>
</dbReference>
<dbReference type="RefSeq" id="XP_006522963.1">
    <molecule id="P81270-3"/>
    <property type="nucleotide sequence ID" value="XM_006522900.3"/>
</dbReference>
<dbReference type="BMRB" id="P81270"/>
<dbReference type="SMR" id="P81270"/>
<dbReference type="BioGRID" id="199504">
    <property type="interactions" value="5"/>
</dbReference>
<dbReference type="FunCoup" id="P81270">
    <property type="interactions" value="1032"/>
</dbReference>
<dbReference type="IntAct" id="P81270">
    <property type="interactions" value="2"/>
</dbReference>
<dbReference type="STRING" id="10090.ENSMUSP00000156669"/>
<dbReference type="iPTMnet" id="P81270"/>
<dbReference type="PhosphoSitePlus" id="P81270"/>
<dbReference type="jPOST" id="P81270"/>
<dbReference type="PaxDb" id="10090-ENSMUSP00000109477"/>
<dbReference type="ProteomicsDB" id="275775">
    <molecule id="P81270-1"/>
</dbReference>
<dbReference type="ProteomicsDB" id="275776">
    <molecule id="P81270-3"/>
</dbReference>
<dbReference type="ProteomicsDB" id="275777">
    <molecule id="P81270-2"/>
</dbReference>
<dbReference type="ProteomicsDB" id="275778">
    <molecule id="P81270-4"/>
</dbReference>
<dbReference type="Antibodypedia" id="4338">
    <property type="antibodies" value="690 antibodies from 41 providers"/>
</dbReference>
<dbReference type="DNASU" id="13876"/>
<dbReference type="Ensembl" id="ENSMUST00000113848.11">
    <molecule id="P81270-2"/>
    <property type="protein sequence ID" value="ENSMUSP00000109479.5"/>
    <property type="gene ID" value="ENSMUSG00000040732.21"/>
</dbReference>
<dbReference type="Ensembl" id="ENSMUST00000122199.10">
    <molecule id="P81270-4"/>
    <property type="protein sequence ID" value="ENSMUSP00000114072.4"/>
    <property type="gene ID" value="ENSMUSG00000040732.21"/>
</dbReference>
<dbReference type="Ensembl" id="ENSMUST00000233269.2">
    <molecule id="P81270-3"/>
    <property type="protein sequence ID" value="ENSMUSP00000156926.2"/>
    <property type="gene ID" value="ENSMUSG00000040732.21"/>
</dbReference>
<dbReference type="Ensembl" id="ENSMUST00000233881.2">
    <molecule id="P81270-1"/>
    <property type="protein sequence ID" value="ENSMUSP00000156669.2"/>
    <property type="gene ID" value="ENSMUSG00000040732.21"/>
</dbReference>
<dbReference type="GeneID" id="13876"/>
<dbReference type="KEGG" id="mmu:13876"/>
<dbReference type="UCSC" id="uc008acb.2">
    <molecule id="P81270-1"/>
    <property type="organism name" value="mouse"/>
</dbReference>
<dbReference type="UCSC" id="uc008acc.2">
    <molecule id="P81270-2"/>
    <property type="organism name" value="mouse"/>
</dbReference>
<dbReference type="AGR" id="MGI:95415"/>
<dbReference type="CTD" id="2078"/>
<dbReference type="MGI" id="MGI:95415">
    <property type="gene designation" value="Erg"/>
</dbReference>
<dbReference type="VEuPathDB" id="HostDB:ENSMUSG00000040732"/>
<dbReference type="eggNOG" id="KOG3806">
    <property type="taxonomic scope" value="Eukaryota"/>
</dbReference>
<dbReference type="GeneTree" id="ENSGT00940000160662"/>
<dbReference type="InParanoid" id="P81270"/>
<dbReference type="OMA" id="RVPQQEW"/>
<dbReference type="OrthoDB" id="10067219at2759"/>
<dbReference type="PhylomeDB" id="P81270"/>
<dbReference type="TreeFam" id="TF350537"/>
<dbReference type="BioGRID-ORCS" id="13876">
    <property type="hits" value="2 hits in 78 CRISPR screens"/>
</dbReference>
<dbReference type="ChiTaRS" id="Erg">
    <property type="organism name" value="mouse"/>
</dbReference>
<dbReference type="PRO" id="PR:P81270"/>
<dbReference type="Proteomes" id="UP000000589">
    <property type="component" value="Chromosome 16"/>
</dbReference>
<dbReference type="RNAct" id="P81270">
    <property type="molecule type" value="protein"/>
</dbReference>
<dbReference type="Bgee" id="ENSMUSG00000040732">
    <property type="expression patterns" value="Expressed in brain blood vessel and 226 other cell types or tissues"/>
</dbReference>
<dbReference type="ExpressionAtlas" id="P81270">
    <property type="expression patterns" value="baseline and differential"/>
</dbReference>
<dbReference type="GO" id="GO:0005829">
    <property type="term" value="C:cytosol"/>
    <property type="evidence" value="ECO:0007669"/>
    <property type="project" value="Ensembl"/>
</dbReference>
<dbReference type="GO" id="GO:0005654">
    <property type="term" value="C:nucleoplasm"/>
    <property type="evidence" value="ECO:0007669"/>
    <property type="project" value="Ensembl"/>
</dbReference>
<dbReference type="GO" id="GO:0005634">
    <property type="term" value="C:nucleus"/>
    <property type="evidence" value="ECO:0000314"/>
    <property type="project" value="MGI"/>
</dbReference>
<dbReference type="GO" id="GO:1990904">
    <property type="term" value="C:ribonucleoprotein complex"/>
    <property type="evidence" value="ECO:0000250"/>
    <property type="project" value="UniProtKB"/>
</dbReference>
<dbReference type="GO" id="GO:0003682">
    <property type="term" value="F:chromatin binding"/>
    <property type="evidence" value="ECO:0000314"/>
    <property type="project" value="MGI"/>
</dbReference>
<dbReference type="GO" id="GO:0001228">
    <property type="term" value="F:DNA-binding transcription activator activity, RNA polymerase II-specific"/>
    <property type="evidence" value="ECO:0007669"/>
    <property type="project" value="Ensembl"/>
</dbReference>
<dbReference type="GO" id="GO:0000978">
    <property type="term" value="F:RNA polymerase II cis-regulatory region sequence-specific DNA binding"/>
    <property type="evidence" value="ECO:0007669"/>
    <property type="project" value="Ensembl"/>
</dbReference>
<dbReference type="FunFam" id="1.10.150.50:FF:000010">
    <property type="entry name" value="Fli-1 proto-oncogene, ETS transcription factor"/>
    <property type="match status" value="1"/>
</dbReference>
<dbReference type="FunFam" id="1.10.10.10:FF:000039">
    <property type="entry name" value="Friend leukemia integration 1 transcription factor"/>
    <property type="match status" value="1"/>
</dbReference>
<dbReference type="Gene3D" id="1.10.150.50">
    <property type="entry name" value="Transcription Factor, Ets-1"/>
    <property type="match status" value="1"/>
</dbReference>
<dbReference type="Gene3D" id="1.10.10.10">
    <property type="entry name" value="Winged helix-like DNA-binding domain superfamily/Winged helix DNA-binding domain"/>
    <property type="match status" value="1"/>
</dbReference>
<dbReference type="InterPro" id="IPR000418">
    <property type="entry name" value="Ets_dom"/>
</dbReference>
<dbReference type="InterPro" id="IPR046328">
    <property type="entry name" value="ETS_fam"/>
</dbReference>
<dbReference type="InterPro" id="IPR003118">
    <property type="entry name" value="Pointed_dom"/>
</dbReference>
<dbReference type="InterPro" id="IPR013761">
    <property type="entry name" value="SAM/pointed_sf"/>
</dbReference>
<dbReference type="InterPro" id="IPR036388">
    <property type="entry name" value="WH-like_DNA-bd_sf"/>
</dbReference>
<dbReference type="InterPro" id="IPR036390">
    <property type="entry name" value="WH_DNA-bd_sf"/>
</dbReference>
<dbReference type="PANTHER" id="PTHR11849">
    <property type="entry name" value="ETS"/>
    <property type="match status" value="1"/>
</dbReference>
<dbReference type="PANTHER" id="PTHR11849:SF216">
    <property type="entry name" value="TRANSCRIPTIONAL REGULATOR ERG"/>
    <property type="match status" value="1"/>
</dbReference>
<dbReference type="Pfam" id="PF00178">
    <property type="entry name" value="Ets"/>
    <property type="match status" value="1"/>
</dbReference>
<dbReference type="Pfam" id="PF02198">
    <property type="entry name" value="SAM_PNT"/>
    <property type="match status" value="1"/>
</dbReference>
<dbReference type="PRINTS" id="PR00454">
    <property type="entry name" value="ETSDOMAIN"/>
</dbReference>
<dbReference type="SMART" id="SM00413">
    <property type="entry name" value="ETS"/>
    <property type="match status" value="1"/>
</dbReference>
<dbReference type="SMART" id="SM00251">
    <property type="entry name" value="SAM_PNT"/>
    <property type="match status" value="1"/>
</dbReference>
<dbReference type="SUPFAM" id="SSF47769">
    <property type="entry name" value="SAM/Pointed domain"/>
    <property type="match status" value="1"/>
</dbReference>
<dbReference type="SUPFAM" id="SSF46785">
    <property type="entry name" value="Winged helix' DNA-binding domain"/>
    <property type="match status" value="1"/>
</dbReference>
<dbReference type="PROSITE" id="PS00345">
    <property type="entry name" value="ETS_DOMAIN_1"/>
    <property type="match status" value="1"/>
</dbReference>
<dbReference type="PROSITE" id="PS00346">
    <property type="entry name" value="ETS_DOMAIN_2"/>
    <property type="match status" value="1"/>
</dbReference>
<dbReference type="PROSITE" id="PS50061">
    <property type="entry name" value="ETS_DOMAIN_3"/>
    <property type="match status" value="1"/>
</dbReference>
<dbReference type="PROSITE" id="PS51433">
    <property type="entry name" value="PNT"/>
    <property type="match status" value="1"/>
</dbReference>
<protein>
    <recommendedName>
        <fullName>Transcriptional regulator ERG</fullName>
    </recommendedName>
</protein>
<name>ERG_MOUSE</name>
<gene>
    <name type="primary">Erg</name>
    <name type="synonym">Erg-3</name>
</gene>
<accession>P81270</accession>
<accession>A6H6E7</accession>
<accession>Q8C5L4</accession>
<accession>Q920K7</accession>
<accession>Q920K8</accession>
<accession>Q920K9</accession>
<sequence length="486" mass="54614">MIQTVPDPAAHIKEALSVVSEDQSLFECAYGTPHLAKTEMTASSSSDYGQTSKMSPRVPQQDWLSQAPARVTIKMECNPSQVNGSRNSPDECSVNKGGKMVGSPDTVGMSYGSYMEEKHVPPPNMTTNERRVIVPADPTLWSTDHVRQWLEWAVKEYGLLDVDVLLFQNIDGKELCKMTKDDFQRLTPSYNADILLSHLHYLRETPLPHLTSDDVDKALQNSPRLMHARNTGGAAFIFPNTSVYPEATQRITTRPDLPYEPPRRSAWTGHSHLTPQSKAAQPSPSAVPKTEDQRPQLDPYQILGPTSSRLANPGSGQIQLWQFLLELLSDSSNSNCITWEGTNGEFKMTDPDEVARRWGERKSKPNMNYDKLSRALRYYYDKNIMTKVHGKRYAYKFDFHGIAQALQPHPPESSLYKYPSDLPYMGSYHAHPQKMNFVSPHPPALPVTSSSFFASPNPYWNSPTGGIYPNTRLPASHMPSHLGTYY</sequence>
<keyword id="KW-0025">Alternative splicing</keyword>
<keyword id="KW-0963">Cytoplasm</keyword>
<keyword id="KW-0238">DNA-binding</keyword>
<keyword id="KW-1017">Isopeptide bond</keyword>
<keyword id="KW-0539">Nucleus</keyword>
<keyword id="KW-0597">Phosphoprotein</keyword>
<keyword id="KW-1185">Reference proteome</keyword>
<keyword id="KW-0804">Transcription</keyword>
<keyword id="KW-0805">Transcription regulation</keyword>
<keyword id="KW-0832">Ubl conjugation</keyword>